<evidence type="ECO:0000255" key="1">
    <source>
        <dbReference type="HAMAP-Rule" id="MF_00691"/>
    </source>
</evidence>
<evidence type="ECO:0007829" key="2">
    <source>
        <dbReference type="PDB" id="2XU2"/>
    </source>
</evidence>
<accession>Q9HVR0</accession>
<feature type="chain" id="PRO_0000185027" description="5-oxoprolinase subunit A 3">
    <location>
        <begin position="1"/>
        <end position="251"/>
    </location>
</feature>
<feature type="strand" evidence="2">
    <location>
        <begin position="9"/>
        <end position="14"/>
    </location>
</feature>
<feature type="helix" evidence="2">
    <location>
        <begin position="26"/>
        <end position="29"/>
    </location>
</feature>
<feature type="helix" evidence="2">
    <location>
        <begin position="30"/>
        <end position="32"/>
    </location>
</feature>
<feature type="strand" evidence="2">
    <location>
        <begin position="34"/>
        <end position="39"/>
    </location>
</feature>
<feature type="strand" evidence="2">
    <location>
        <begin position="41"/>
        <end position="44"/>
    </location>
</feature>
<feature type="helix" evidence="2">
    <location>
        <begin position="47"/>
        <end position="59"/>
    </location>
</feature>
<feature type="strand" evidence="2">
    <location>
        <begin position="63"/>
        <end position="67"/>
    </location>
</feature>
<feature type="turn" evidence="2">
    <location>
        <begin position="73"/>
        <end position="77"/>
    </location>
</feature>
<feature type="helix" evidence="2">
    <location>
        <begin position="85"/>
        <end position="105"/>
    </location>
</feature>
<feature type="helix" evidence="2">
    <location>
        <begin position="117"/>
        <end position="125"/>
    </location>
</feature>
<feature type="helix" evidence="2">
    <location>
        <begin position="127"/>
        <end position="140"/>
    </location>
</feature>
<feature type="strand" evidence="2">
    <location>
        <begin position="146"/>
        <end position="149"/>
    </location>
</feature>
<feature type="helix" evidence="2">
    <location>
        <begin position="155"/>
        <end position="164"/>
    </location>
</feature>
<feature type="strand" evidence="2">
    <location>
        <begin position="168"/>
        <end position="176"/>
    </location>
</feature>
<feature type="strand" evidence="2">
    <location>
        <begin position="182"/>
        <end position="184"/>
    </location>
</feature>
<feature type="strand" evidence="2">
    <location>
        <begin position="187"/>
        <end position="189"/>
    </location>
</feature>
<feature type="helix" evidence="2">
    <location>
        <begin position="197"/>
        <end position="209"/>
    </location>
</feature>
<feature type="strand" evidence="2">
    <location>
        <begin position="212"/>
        <end position="214"/>
    </location>
</feature>
<feature type="strand" evidence="2">
    <location>
        <begin position="220"/>
        <end position="222"/>
    </location>
</feature>
<feature type="strand" evidence="2">
    <location>
        <begin position="226"/>
        <end position="229"/>
    </location>
</feature>
<feature type="strand" evidence="2">
    <location>
        <begin position="232"/>
        <end position="234"/>
    </location>
</feature>
<feature type="helix" evidence="2">
    <location>
        <begin position="235"/>
        <end position="239"/>
    </location>
</feature>
<organism>
    <name type="scientific">Pseudomonas aeruginosa (strain ATCC 15692 / DSM 22644 / CIP 104116 / JCM 14847 / LMG 12228 / 1C / PRS 101 / PAO1)</name>
    <dbReference type="NCBI Taxonomy" id="208964"/>
    <lineage>
        <taxon>Bacteria</taxon>
        <taxon>Pseudomonadati</taxon>
        <taxon>Pseudomonadota</taxon>
        <taxon>Gammaproteobacteria</taxon>
        <taxon>Pseudomonadales</taxon>
        <taxon>Pseudomonadaceae</taxon>
        <taxon>Pseudomonas</taxon>
    </lineage>
</organism>
<dbReference type="EC" id="3.5.2.9" evidence="1"/>
<dbReference type="EMBL" id="AE004091">
    <property type="protein sequence ID" value="AAG07899.1"/>
    <property type="molecule type" value="Genomic_DNA"/>
</dbReference>
<dbReference type="PIR" id="C83083">
    <property type="entry name" value="C83083"/>
</dbReference>
<dbReference type="RefSeq" id="NP_253201.1">
    <property type="nucleotide sequence ID" value="NC_002516.2"/>
</dbReference>
<dbReference type="RefSeq" id="WP_003112852.1">
    <property type="nucleotide sequence ID" value="NZ_QZGE01000004.1"/>
</dbReference>
<dbReference type="PDB" id="2XU2">
    <property type="method" value="X-ray"/>
    <property type="resolution" value="2.30 A"/>
    <property type="chains" value="A=2-251"/>
</dbReference>
<dbReference type="PDBsum" id="2XU2"/>
<dbReference type="SMR" id="Q9HVR0"/>
<dbReference type="FunCoup" id="Q9HVR0">
    <property type="interactions" value="51"/>
</dbReference>
<dbReference type="STRING" id="208964.PA4511"/>
<dbReference type="PaxDb" id="208964-PA4511"/>
<dbReference type="DNASU" id="881154"/>
<dbReference type="GeneID" id="881154"/>
<dbReference type="KEGG" id="pae:PA4511"/>
<dbReference type="PATRIC" id="fig|208964.12.peg.4721"/>
<dbReference type="PseudoCAP" id="PA4511"/>
<dbReference type="HOGENOM" id="CLU_069535_0_0_6"/>
<dbReference type="InParanoid" id="Q9HVR0"/>
<dbReference type="OrthoDB" id="9773478at2"/>
<dbReference type="PhylomeDB" id="Q9HVR0"/>
<dbReference type="BioCyc" id="PAER208964:G1FZ6-4600-MONOMER"/>
<dbReference type="BRENDA" id="3.5.2.9">
    <property type="organism ID" value="5087"/>
</dbReference>
<dbReference type="EvolutionaryTrace" id="Q9HVR0"/>
<dbReference type="Proteomes" id="UP000002438">
    <property type="component" value="Chromosome"/>
</dbReference>
<dbReference type="GO" id="GO:0017168">
    <property type="term" value="F:5-oxoprolinase (ATP-hydrolyzing) activity"/>
    <property type="evidence" value="ECO:0007669"/>
    <property type="project" value="UniProtKB-UniRule"/>
</dbReference>
<dbReference type="GO" id="GO:0005524">
    <property type="term" value="F:ATP binding"/>
    <property type="evidence" value="ECO:0007669"/>
    <property type="project" value="UniProtKB-UniRule"/>
</dbReference>
<dbReference type="GO" id="GO:0005975">
    <property type="term" value="P:carbohydrate metabolic process"/>
    <property type="evidence" value="ECO:0007669"/>
    <property type="project" value="InterPro"/>
</dbReference>
<dbReference type="CDD" id="cd10787">
    <property type="entry name" value="LamB_YcsF_like"/>
    <property type="match status" value="1"/>
</dbReference>
<dbReference type="Gene3D" id="3.20.20.370">
    <property type="entry name" value="Glycoside hydrolase/deacetylase"/>
    <property type="match status" value="1"/>
</dbReference>
<dbReference type="HAMAP" id="MF_00691">
    <property type="entry name" value="PxpA"/>
    <property type="match status" value="1"/>
</dbReference>
<dbReference type="InterPro" id="IPR011330">
    <property type="entry name" value="Glyco_hydro/deAcase_b/a-brl"/>
</dbReference>
<dbReference type="InterPro" id="IPR005501">
    <property type="entry name" value="LamB/YcsF/PxpA-like"/>
</dbReference>
<dbReference type="NCBIfam" id="NF003814">
    <property type="entry name" value="PRK05406.1-3"/>
    <property type="match status" value="1"/>
</dbReference>
<dbReference type="NCBIfam" id="NF003816">
    <property type="entry name" value="PRK05406.1-5"/>
    <property type="match status" value="1"/>
</dbReference>
<dbReference type="PANTHER" id="PTHR30292:SF0">
    <property type="entry name" value="5-OXOPROLINASE SUBUNIT A"/>
    <property type="match status" value="1"/>
</dbReference>
<dbReference type="PANTHER" id="PTHR30292">
    <property type="entry name" value="UNCHARACTERIZED PROTEIN YBGL-RELATED"/>
    <property type="match status" value="1"/>
</dbReference>
<dbReference type="Pfam" id="PF03746">
    <property type="entry name" value="LamB_YcsF"/>
    <property type="match status" value="1"/>
</dbReference>
<dbReference type="SUPFAM" id="SSF88713">
    <property type="entry name" value="Glycoside hydrolase/deacetylase"/>
    <property type="match status" value="1"/>
</dbReference>
<sequence length="251" mass="27166">MNDTGRRILLNCDMGESFGAWRMGDDVHSMPLVDQANLACGFHAGDPLTMRRAVELAVRHGVSIGAHPAYPDLSGFGRRSLACSAEEVHAMVLYQIGALDAFCRSLGTQVAYVKPHGALYNDLVGDDELLRAVLDACAAYRKGLPLMVLALADNGRELELADEADVPLLFEAFADRAYLPDGRLAPRRLGGAVHHDPQRIIEQALAIARGEAFPDYDGNPLRLTADSLCVHGDNPQSLAVLRRLRAALDSL</sequence>
<proteinExistence type="evidence at protein level"/>
<comment type="function">
    <text evidence="1">Catalyzes the cleavage of 5-oxoproline to form L-glutamate coupled to the hydrolysis of ATP to ADP and inorganic phosphate.</text>
</comment>
<comment type="catalytic activity">
    <reaction evidence="1">
        <text>5-oxo-L-proline + ATP + 2 H2O = L-glutamate + ADP + phosphate + H(+)</text>
        <dbReference type="Rhea" id="RHEA:10348"/>
        <dbReference type="ChEBI" id="CHEBI:15377"/>
        <dbReference type="ChEBI" id="CHEBI:15378"/>
        <dbReference type="ChEBI" id="CHEBI:29985"/>
        <dbReference type="ChEBI" id="CHEBI:30616"/>
        <dbReference type="ChEBI" id="CHEBI:43474"/>
        <dbReference type="ChEBI" id="CHEBI:58402"/>
        <dbReference type="ChEBI" id="CHEBI:456216"/>
        <dbReference type="EC" id="3.5.2.9"/>
    </reaction>
</comment>
<comment type="subunit">
    <text evidence="1">Forms a complex composed of PxpA, PxpB and PxpC.</text>
</comment>
<comment type="similarity">
    <text evidence="1">Belongs to the LamB/PxpA family.</text>
</comment>
<protein>
    <recommendedName>
        <fullName evidence="1">5-oxoprolinase subunit A 3</fullName>
        <shortName evidence="1">5-OPase subunit A 3</shortName>
        <ecNumber evidence="1">3.5.2.9</ecNumber>
    </recommendedName>
    <alternativeName>
        <fullName evidence="1">5-oxoprolinase (ATP-hydrolyzing) subunit A 3</fullName>
    </alternativeName>
</protein>
<name>PXPA3_PSEAE</name>
<gene>
    <name evidence="1" type="primary">pxpA3</name>
    <name type="ordered locus">PA4511</name>
</gene>
<keyword id="KW-0002">3D-structure</keyword>
<keyword id="KW-0067">ATP-binding</keyword>
<keyword id="KW-0378">Hydrolase</keyword>
<keyword id="KW-0547">Nucleotide-binding</keyword>
<keyword id="KW-1185">Reference proteome</keyword>
<reference key="1">
    <citation type="journal article" date="2000" name="Nature">
        <title>Complete genome sequence of Pseudomonas aeruginosa PAO1, an opportunistic pathogen.</title>
        <authorList>
            <person name="Stover C.K."/>
            <person name="Pham X.-Q.T."/>
            <person name="Erwin A.L."/>
            <person name="Mizoguchi S.D."/>
            <person name="Warrener P."/>
            <person name="Hickey M.J."/>
            <person name="Brinkman F.S.L."/>
            <person name="Hufnagle W.O."/>
            <person name="Kowalik D.J."/>
            <person name="Lagrou M."/>
            <person name="Garber R.L."/>
            <person name="Goltry L."/>
            <person name="Tolentino E."/>
            <person name="Westbrock-Wadman S."/>
            <person name="Yuan Y."/>
            <person name="Brody L.L."/>
            <person name="Coulter S.N."/>
            <person name="Folger K.R."/>
            <person name="Kas A."/>
            <person name="Larbig K."/>
            <person name="Lim R.M."/>
            <person name="Smith K.A."/>
            <person name="Spencer D.H."/>
            <person name="Wong G.K.-S."/>
            <person name="Wu Z."/>
            <person name="Paulsen I.T."/>
            <person name="Reizer J."/>
            <person name="Saier M.H. Jr."/>
            <person name="Hancock R.E.W."/>
            <person name="Lory S."/>
            <person name="Olson M.V."/>
        </authorList>
    </citation>
    <scope>NUCLEOTIDE SEQUENCE [LARGE SCALE GENOMIC DNA]</scope>
    <source>
        <strain>ATCC 15692 / DSM 22644 / CIP 104116 / JCM 14847 / LMG 12228 / 1C / PRS 101 / PAO1</strain>
    </source>
</reference>